<feature type="chain" id="PRO_0000418654" description="Galactinol synthase 2">
    <location>
        <begin position="1"/>
        <end position="338"/>
    </location>
</feature>
<feature type="active site" evidence="1">
    <location>
        <position position="105"/>
    </location>
</feature>
<feature type="binding site" evidence="1">
    <location>
        <position position="121"/>
    </location>
    <ligand>
        <name>Mn(2+)</name>
        <dbReference type="ChEBI" id="CHEBI:29035"/>
    </ligand>
</feature>
<feature type="binding site" evidence="1">
    <location>
        <position position="123"/>
    </location>
    <ligand>
        <name>Mn(2+)</name>
        <dbReference type="ChEBI" id="CHEBI:29035"/>
    </ligand>
</feature>
<feature type="binding site" evidence="1">
    <location>
        <position position="258"/>
    </location>
    <ligand>
        <name>Mn(2+)</name>
        <dbReference type="ChEBI" id="CHEBI:29035"/>
    </ligand>
</feature>
<protein>
    <recommendedName>
        <fullName>Galactinol synthase 2</fullName>
        <shortName>GolS-2</shortName>
        <shortName>SlGolS2</shortName>
        <ecNumber>2.4.1.123</ecNumber>
    </recommendedName>
</protein>
<evidence type="ECO:0000250" key="1"/>
<evidence type="ECO:0000305" key="2"/>
<keyword id="KW-0119">Carbohydrate metabolism</keyword>
<keyword id="KW-0963">Cytoplasm</keyword>
<keyword id="KW-0299">Galactose metabolism</keyword>
<keyword id="KW-0328">Glycosyltransferase</keyword>
<keyword id="KW-0464">Manganese</keyword>
<keyword id="KW-0479">Metal-binding</keyword>
<keyword id="KW-1185">Reference proteome</keyword>
<keyword id="KW-0808">Transferase</keyword>
<sequence>MAPNVFGLATKATGLAKAKSLSSRAYVTFLAGNGDYWKGVVGLVKGLRKAKSAYPLVVACLPDVPEEHRRILINQGCIVREIEPVYPPHNQTQFAMAYYVINYSKLRIWEFVEYSKMIYLDGDIQVFDNIDHLFDLPDGYFYAVMDCFCEKTWSHTPQYKVGYCQQCPDKVQWTEDLGPKPSLYFNAGMFVYEPSLSTYDDLLKTLKVTPPTPFAEQDFLNMYFRDVYKPIPNDYNLVLAMLWRHPENVDLEKVKVVHYCAAGSKPWRYTGKEENMDREDIKMLIKKWWDIYDDESLDYKNSNVVMNAVDGEVEAQKIMEALSEAGVVHYITAPSAAS</sequence>
<organism>
    <name type="scientific">Solanum lycopersicum</name>
    <name type="common">Tomato</name>
    <name type="synonym">Lycopersicon esculentum</name>
    <dbReference type="NCBI Taxonomy" id="4081"/>
    <lineage>
        <taxon>Eukaryota</taxon>
        <taxon>Viridiplantae</taxon>
        <taxon>Streptophyta</taxon>
        <taxon>Embryophyta</taxon>
        <taxon>Tracheophyta</taxon>
        <taxon>Spermatophyta</taxon>
        <taxon>Magnoliopsida</taxon>
        <taxon>eudicotyledons</taxon>
        <taxon>Gunneridae</taxon>
        <taxon>Pentapetalae</taxon>
        <taxon>asterids</taxon>
        <taxon>lamiids</taxon>
        <taxon>Solanales</taxon>
        <taxon>Solanaceae</taxon>
        <taxon>Solanoideae</taxon>
        <taxon>Solaneae</taxon>
        <taxon>Solanum</taxon>
        <taxon>Solanum subgen. Lycopersicon</taxon>
    </lineage>
</organism>
<comment type="function">
    <text evidence="1">Galactinol synthase involved in the biosynthesis of raffinose family oligosaccharides (RFOs) that function as osmoprotectants. May promote plant stress tolerance (By similarity).</text>
</comment>
<comment type="catalytic activity">
    <reaction>
        <text>myo-inositol + UDP-alpha-D-galactose = alpha-D-galactosyl-(1-&gt;3)-1D-myo-inositol + UDP + H(+)</text>
        <dbReference type="Rhea" id="RHEA:12464"/>
        <dbReference type="ChEBI" id="CHEBI:15378"/>
        <dbReference type="ChEBI" id="CHEBI:17268"/>
        <dbReference type="ChEBI" id="CHEBI:17505"/>
        <dbReference type="ChEBI" id="CHEBI:58223"/>
        <dbReference type="ChEBI" id="CHEBI:66914"/>
        <dbReference type="EC" id="2.4.1.123"/>
    </reaction>
</comment>
<comment type="cofactor">
    <cofactor evidence="1">
        <name>a divalent metal cation</name>
        <dbReference type="ChEBI" id="CHEBI:60240"/>
    </cofactor>
</comment>
<comment type="subcellular location">
    <subcellularLocation>
        <location evidence="2">Cytoplasm</location>
    </subcellularLocation>
</comment>
<comment type="similarity">
    <text evidence="2">Belongs to the glycosyltransferase 8 family. Galactosyltransferase subfamily.</text>
</comment>
<proteinExistence type="evidence at transcript level"/>
<reference key="1">
    <citation type="submission" date="2009-02" db="EMBL/GenBank/DDBJ databases">
        <title>Tomato galactinol synthase.</title>
        <authorList>
            <person name="Yuasa T."/>
            <person name="Iwaya-Inoue M."/>
        </authorList>
    </citation>
    <scope>NUCLEOTIDE SEQUENCE [MRNA]</scope>
    <source>
        <strain>cv. MicroTom</strain>
    </source>
</reference>
<name>GOLS2_SOLLC</name>
<accession>C7G304</accession>
<dbReference type="EC" id="2.4.1.123"/>
<dbReference type="EMBL" id="AB486014">
    <property type="protein sequence ID" value="BAH98060.1"/>
    <property type="molecule type" value="mRNA"/>
</dbReference>
<dbReference type="RefSeq" id="NP_001234668.2">
    <property type="nucleotide sequence ID" value="NM_001247739.2"/>
</dbReference>
<dbReference type="SMR" id="C7G304"/>
<dbReference type="STRING" id="4081.C7G304"/>
<dbReference type="CAZy" id="GT8">
    <property type="family name" value="Glycosyltransferase Family 8"/>
</dbReference>
<dbReference type="PaxDb" id="4081-Solyc02g084980.2.1"/>
<dbReference type="GeneID" id="100316891"/>
<dbReference type="KEGG" id="sly:100316891"/>
<dbReference type="eggNOG" id="KOG1950">
    <property type="taxonomic scope" value="Eukaryota"/>
</dbReference>
<dbReference type="InParanoid" id="C7G304"/>
<dbReference type="OrthoDB" id="2014201at2759"/>
<dbReference type="Proteomes" id="UP000004994">
    <property type="component" value="Unplaced"/>
</dbReference>
<dbReference type="ExpressionAtlas" id="C7G304">
    <property type="expression patterns" value="baseline and differential"/>
</dbReference>
<dbReference type="GO" id="GO:0005737">
    <property type="term" value="C:cytoplasm"/>
    <property type="evidence" value="ECO:0007669"/>
    <property type="project" value="UniProtKB-SubCell"/>
</dbReference>
<dbReference type="GO" id="GO:0016757">
    <property type="term" value="F:glycosyltransferase activity"/>
    <property type="evidence" value="ECO:0000318"/>
    <property type="project" value="GO_Central"/>
</dbReference>
<dbReference type="GO" id="GO:0047216">
    <property type="term" value="F:inositol 3-alpha-galactosyltransferase activity"/>
    <property type="evidence" value="ECO:0007669"/>
    <property type="project" value="UniProtKB-EC"/>
</dbReference>
<dbReference type="GO" id="GO:0046872">
    <property type="term" value="F:metal ion binding"/>
    <property type="evidence" value="ECO:0007669"/>
    <property type="project" value="UniProtKB-KW"/>
</dbReference>
<dbReference type="GO" id="GO:0006012">
    <property type="term" value="P:galactose metabolic process"/>
    <property type="evidence" value="ECO:0007669"/>
    <property type="project" value="UniProtKB-KW"/>
</dbReference>
<dbReference type="CDD" id="cd02537">
    <property type="entry name" value="GT8_Glycogenin"/>
    <property type="match status" value="1"/>
</dbReference>
<dbReference type="FunFam" id="3.90.550.10:FF:000049">
    <property type="entry name" value="Hexosyltransferase"/>
    <property type="match status" value="1"/>
</dbReference>
<dbReference type="Gene3D" id="3.90.550.10">
    <property type="entry name" value="Spore Coat Polysaccharide Biosynthesis Protein SpsA, Chain A"/>
    <property type="match status" value="1"/>
</dbReference>
<dbReference type="InterPro" id="IPR002495">
    <property type="entry name" value="Glyco_trans_8"/>
</dbReference>
<dbReference type="InterPro" id="IPR050587">
    <property type="entry name" value="GNT1/Glycosyltrans_8"/>
</dbReference>
<dbReference type="InterPro" id="IPR029044">
    <property type="entry name" value="Nucleotide-diphossugar_trans"/>
</dbReference>
<dbReference type="PANTHER" id="PTHR11183">
    <property type="entry name" value="GLYCOGENIN SUBFAMILY MEMBER"/>
    <property type="match status" value="1"/>
</dbReference>
<dbReference type="Pfam" id="PF01501">
    <property type="entry name" value="Glyco_transf_8"/>
    <property type="match status" value="1"/>
</dbReference>
<dbReference type="SUPFAM" id="SSF53448">
    <property type="entry name" value="Nucleotide-diphospho-sugar transferases"/>
    <property type="match status" value="1"/>
</dbReference>
<gene>
    <name type="primary">GOLS2</name>
</gene>